<keyword id="KW-0067">ATP-binding</keyword>
<keyword id="KW-0143">Chaperone</keyword>
<keyword id="KW-0496">Mitochondrion</keyword>
<keyword id="KW-0547">Nucleotide-binding</keyword>
<keyword id="KW-0346">Stress response</keyword>
<keyword id="KW-0809">Transit peptide</keyword>
<accession>P50142</accession>
<reference key="1">
    <citation type="journal article" date="1991" name="Infect. Immun.">
        <title>Protective efficacy of a 62-kilodalton antigen, HIS-62, from the cell wall and cell membrane of Histoplasma capsulatum yeast cells.</title>
        <authorList>
            <person name="Gomez F.J."/>
            <person name="Gomez A.M."/>
            <person name="Deepe G.S. Jr."/>
        </authorList>
    </citation>
    <scope>NUCLEOTIDE SEQUENCE [GENOMIC DNA]</scope>
    <source>
        <strain>ATCC 26032 / G217B</strain>
    </source>
</reference>
<reference key="2">
    <citation type="submission" date="1999-04" db="EMBL/GenBank/DDBJ databases">
        <authorList>
            <person name="Gomez G."/>
        </authorList>
    </citation>
    <scope>SEQUENCE REVISION</scope>
</reference>
<gene>
    <name type="primary">HSP60</name>
</gene>
<comment type="function">
    <text>May participate in assembly and/or disassembly of proteins imported into the mitochondrion. HSP60 are ATPases and have affinity for unfolded proteins.</text>
</comment>
<comment type="subcellular location">
    <subcellularLocation>
        <location>Mitochondrion</location>
    </subcellularLocation>
</comment>
<comment type="similarity">
    <text evidence="2">Belongs to the chaperonin (HSP60) family.</text>
</comment>
<feature type="transit peptide" description="Mitochondrion" evidence="1">
    <location>
        <begin position="1"/>
        <end position="43"/>
    </location>
</feature>
<feature type="chain" id="PRO_0000005040" description="Heat shock protein 60, mitochondrial">
    <location>
        <begin position="44"/>
        <end position="590"/>
    </location>
</feature>
<name>HSP60_AJECA</name>
<protein>
    <recommendedName>
        <fullName>Heat shock protein 60, mitochondrial</fullName>
    </recommendedName>
    <alternativeName>
        <fullName>Antigen HIS-62</fullName>
    </alternativeName>
</protein>
<dbReference type="EMBL" id="L11390">
    <property type="protein sequence ID" value="AAB46362.2"/>
    <property type="molecule type" value="Genomic_DNA"/>
</dbReference>
<dbReference type="SMR" id="P50142"/>
<dbReference type="MoonProt" id="P50142"/>
<dbReference type="GO" id="GO:0005737">
    <property type="term" value="C:cytoplasm"/>
    <property type="evidence" value="ECO:0000314"/>
    <property type="project" value="CAFA"/>
</dbReference>
<dbReference type="GO" id="GO:0009277">
    <property type="term" value="C:fungal-type cell wall"/>
    <property type="evidence" value="ECO:0000314"/>
    <property type="project" value="CAFA"/>
</dbReference>
<dbReference type="GO" id="GO:0005739">
    <property type="term" value="C:mitochondrion"/>
    <property type="evidence" value="ECO:0007669"/>
    <property type="project" value="UniProtKB-SubCell"/>
</dbReference>
<dbReference type="GO" id="GO:0005524">
    <property type="term" value="F:ATP binding"/>
    <property type="evidence" value="ECO:0007669"/>
    <property type="project" value="UniProtKB-KW"/>
</dbReference>
<dbReference type="GO" id="GO:0140662">
    <property type="term" value="F:ATP-dependent protein folding chaperone"/>
    <property type="evidence" value="ECO:0007669"/>
    <property type="project" value="InterPro"/>
</dbReference>
<dbReference type="GO" id="GO:0046812">
    <property type="term" value="F:host cell surface binding"/>
    <property type="evidence" value="ECO:0000314"/>
    <property type="project" value="CAFA"/>
</dbReference>
<dbReference type="GO" id="GO:0005178">
    <property type="term" value="F:integrin binding"/>
    <property type="evidence" value="ECO:0000353"/>
    <property type="project" value="CAFA"/>
</dbReference>
<dbReference type="GO" id="GO:0044650">
    <property type="term" value="P:adhesion of symbiont to host cell"/>
    <property type="evidence" value="ECO:0000314"/>
    <property type="project" value="CAFA"/>
</dbReference>
<dbReference type="GO" id="GO:1900036">
    <property type="term" value="P:positive regulation of cellular response to heat"/>
    <property type="evidence" value="ECO:0000314"/>
    <property type="project" value="CAFA"/>
</dbReference>
<dbReference type="GO" id="GO:0042026">
    <property type="term" value="P:protein refolding"/>
    <property type="evidence" value="ECO:0007669"/>
    <property type="project" value="InterPro"/>
</dbReference>
<dbReference type="GO" id="GO:0009408">
    <property type="term" value="P:response to heat"/>
    <property type="evidence" value="ECO:0000315"/>
    <property type="project" value="UniProtKB"/>
</dbReference>
<dbReference type="CDD" id="cd03344">
    <property type="entry name" value="GroEL"/>
    <property type="match status" value="1"/>
</dbReference>
<dbReference type="FunFam" id="1.10.560.10:FF:000001">
    <property type="entry name" value="60 kDa chaperonin"/>
    <property type="match status" value="1"/>
</dbReference>
<dbReference type="FunFam" id="3.50.7.10:FF:000001">
    <property type="entry name" value="60 kDa chaperonin"/>
    <property type="match status" value="1"/>
</dbReference>
<dbReference type="Gene3D" id="3.50.7.10">
    <property type="entry name" value="GroEL"/>
    <property type="match status" value="1"/>
</dbReference>
<dbReference type="Gene3D" id="1.10.560.10">
    <property type="entry name" value="GroEL-like equatorial domain"/>
    <property type="match status" value="1"/>
</dbReference>
<dbReference type="Gene3D" id="3.30.260.10">
    <property type="entry name" value="TCP-1-like chaperonin intermediate domain"/>
    <property type="match status" value="1"/>
</dbReference>
<dbReference type="HAMAP" id="MF_00600">
    <property type="entry name" value="CH60"/>
    <property type="match status" value="1"/>
</dbReference>
<dbReference type="InterPro" id="IPR018370">
    <property type="entry name" value="Chaperonin_Cpn60_CS"/>
</dbReference>
<dbReference type="InterPro" id="IPR001844">
    <property type="entry name" value="Cpn60/GroEL"/>
</dbReference>
<dbReference type="InterPro" id="IPR002423">
    <property type="entry name" value="Cpn60/GroEL/TCP-1"/>
</dbReference>
<dbReference type="InterPro" id="IPR027409">
    <property type="entry name" value="GroEL-like_apical_dom_sf"/>
</dbReference>
<dbReference type="InterPro" id="IPR027413">
    <property type="entry name" value="GROEL-like_equatorial_sf"/>
</dbReference>
<dbReference type="InterPro" id="IPR027410">
    <property type="entry name" value="TCP-1-like_intermed_sf"/>
</dbReference>
<dbReference type="NCBIfam" id="TIGR02348">
    <property type="entry name" value="GroEL"/>
    <property type="match status" value="1"/>
</dbReference>
<dbReference type="NCBIfam" id="NF000592">
    <property type="entry name" value="PRK00013.1"/>
    <property type="match status" value="1"/>
</dbReference>
<dbReference type="NCBIfam" id="NF009487">
    <property type="entry name" value="PRK12849.1"/>
    <property type="match status" value="1"/>
</dbReference>
<dbReference type="NCBIfam" id="NF009488">
    <property type="entry name" value="PRK12850.1"/>
    <property type="match status" value="1"/>
</dbReference>
<dbReference type="NCBIfam" id="NF009489">
    <property type="entry name" value="PRK12851.1"/>
    <property type="match status" value="1"/>
</dbReference>
<dbReference type="PANTHER" id="PTHR45633">
    <property type="entry name" value="60 KDA HEAT SHOCK PROTEIN, MITOCHONDRIAL"/>
    <property type="match status" value="1"/>
</dbReference>
<dbReference type="Pfam" id="PF00118">
    <property type="entry name" value="Cpn60_TCP1"/>
    <property type="match status" value="1"/>
</dbReference>
<dbReference type="PRINTS" id="PR00298">
    <property type="entry name" value="CHAPERONIN60"/>
</dbReference>
<dbReference type="SUPFAM" id="SSF52029">
    <property type="entry name" value="GroEL apical domain-like"/>
    <property type="match status" value="1"/>
</dbReference>
<dbReference type="SUPFAM" id="SSF48592">
    <property type="entry name" value="GroEL equatorial domain-like"/>
    <property type="match status" value="1"/>
</dbReference>
<dbReference type="SUPFAM" id="SSF54849">
    <property type="entry name" value="GroEL-intermediate domain like"/>
    <property type="match status" value="1"/>
</dbReference>
<dbReference type="PROSITE" id="PS00296">
    <property type="entry name" value="CHAPERONINS_CPN60"/>
    <property type="match status" value="1"/>
</dbReference>
<sequence length="590" mass="61889">MQRALSSTSRASVLSSAPTRAPVSRFRSAGLSLQQQRFAHKELKFGVEGRAALLKGIDTLAKAVCTTLGPKGRNVLIESSYGSPKITKDGVTVAKAVTLQDKFENLGARLLQDVASKTNEVAGDGTTTATVLARAIFSETVKNVAAGCNPMDLRRGIQAAVEAVVEYLQANKRDITTTEEIAQVATISANGDTHVGKLISNAMEKVGKEGVITVKDGKTIEDELEVTEGMRFDRGYVSPYFITDTKAQKVEFEKPLIVLSEKKISAVQDIIPALEASTTLRRPLVIIAEDIEGEALAVCILNKLRGQLQVAAVKVPGFGDNRKSILGDIGILTNATVFTDELDMKLEKATADMLGSTGSITITKEDTIILNGDGSKDSIAQRCEQIRGVIADPTTSDYEKEKLQERLAKLSGGVAVIKVGGASEVEVGEKKDRVVDALNATRAAVEEGILPGGGTALLKAAANGLASVKPTSSDQLRRISSLVSAITRPARTIVENAGLEGSVIVGKLTDEHASDFNRGFDSAKGEYVDMIASGIVDPLKVVRTALVDASGVASLLGTTEVAIVEAPEEKGPAGPPGGMGGMGGMGGGMF</sequence>
<evidence type="ECO:0000255" key="1"/>
<evidence type="ECO:0000305" key="2"/>
<organism>
    <name type="scientific">Ajellomyces capsulatus</name>
    <name type="common">Darling's disease fungus</name>
    <name type="synonym">Histoplasma capsulatum</name>
    <dbReference type="NCBI Taxonomy" id="5037"/>
    <lineage>
        <taxon>Eukaryota</taxon>
        <taxon>Fungi</taxon>
        <taxon>Dikarya</taxon>
        <taxon>Ascomycota</taxon>
        <taxon>Pezizomycotina</taxon>
        <taxon>Eurotiomycetes</taxon>
        <taxon>Eurotiomycetidae</taxon>
        <taxon>Onygenales</taxon>
        <taxon>Ajellomycetaceae</taxon>
        <taxon>Histoplasma</taxon>
    </lineage>
</organism>
<proteinExistence type="inferred from homology"/>